<dbReference type="EC" id="4.2.1.108" evidence="1"/>
<dbReference type="EMBL" id="AE003853">
    <property type="protein sequence ID" value="AAF96721.1"/>
    <property type="molecule type" value="Genomic_DNA"/>
</dbReference>
<dbReference type="PIR" id="G82412">
    <property type="entry name" value="G82412"/>
</dbReference>
<dbReference type="RefSeq" id="NP_233209.1">
    <property type="nucleotide sequence ID" value="NC_002506.1"/>
</dbReference>
<dbReference type="RefSeq" id="WP_000637098.1">
    <property type="nucleotide sequence ID" value="NZ_LT906615.1"/>
</dbReference>
<dbReference type="SMR" id="Q9KLC3"/>
<dbReference type="STRING" id="243277.VC_A0823"/>
<dbReference type="DNASU" id="2612354"/>
<dbReference type="EnsemblBacteria" id="AAF96721">
    <property type="protein sequence ID" value="AAF96721"/>
    <property type="gene ID" value="VC_A0823"/>
</dbReference>
<dbReference type="KEGG" id="vch:VC_A0823"/>
<dbReference type="PATRIC" id="fig|243277.26.peg.3443"/>
<dbReference type="eggNOG" id="COG0662">
    <property type="taxonomic scope" value="Bacteria"/>
</dbReference>
<dbReference type="HOGENOM" id="CLU_154525_0_0_6"/>
<dbReference type="UniPathway" id="UPA00067">
    <property type="reaction ID" value="UER00123"/>
</dbReference>
<dbReference type="Proteomes" id="UP000000584">
    <property type="component" value="Chromosome 2"/>
</dbReference>
<dbReference type="GO" id="GO:0033990">
    <property type="term" value="F:ectoine synthase activity"/>
    <property type="evidence" value="ECO:0007669"/>
    <property type="project" value="UniProtKB-EC"/>
</dbReference>
<dbReference type="GO" id="GO:0019491">
    <property type="term" value="P:ectoine biosynthetic process"/>
    <property type="evidence" value="ECO:0007669"/>
    <property type="project" value="UniProtKB-UniRule"/>
</dbReference>
<dbReference type="CDD" id="cd06978">
    <property type="entry name" value="cupin_EctC"/>
    <property type="match status" value="1"/>
</dbReference>
<dbReference type="Gene3D" id="2.60.120.10">
    <property type="entry name" value="Jelly Rolls"/>
    <property type="match status" value="1"/>
</dbReference>
<dbReference type="HAMAP" id="MF_01255">
    <property type="entry name" value="Ectoine_synth"/>
    <property type="match status" value="1"/>
</dbReference>
<dbReference type="InterPro" id="IPR010462">
    <property type="entry name" value="Ectoine_synth"/>
</dbReference>
<dbReference type="InterPro" id="IPR014710">
    <property type="entry name" value="RmlC-like_jellyroll"/>
</dbReference>
<dbReference type="InterPro" id="IPR011051">
    <property type="entry name" value="RmlC_Cupin_sf"/>
</dbReference>
<dbReference type="NCBIfam" id="NF009806">
    <property type="entry name" value="PRK13290.1"/>
    <property type="match status" value="1"/>
</dbReference>
<dbReference type="PANTHER" id="PTHR39289">
    <property type="match status" value="1"/>
</dbReference>
<dbReference type="PANTHER" id="PTHR39289:SF1">
    <property type="entry name" value="L-ECTOINE SYNTHASE"/>
    <property type="match status" value="1"/>
</dbReference>
<dbReference type="Pfam" id="PF06339">
    <property type="entry name" value="Ectoine_synth"/>
    <property type="match status" value="1"/>
</dbReference>
<dbReference type="SUPFAM" id="SSF51182">
    <property type="entry name" value="RmlC-like cupins"/>
    <property type="match status" value="1"/>
</dbReference>
<keyword id="KW-0456">Lyase</keyword>
<keyword id="KW-1185">Reference proteome</keyword>
<comment type="function">
    <text evidence="1">Catalyzes the circularization of gamma-N-acetyl-alpha,gamma-diaminobutyric acid (ADABA) to ectoine (1,4,5,6-tetrahydro-2-methyl-4-pyrimidine carboxylic acid), which is an excellent osmoprotectant.</text>
</comment>
<comment type="catalytic activity">
    <reaction evidence="1">
        <text>(2S)-4-acetamido-2-aminobutanoate = L-ectoine + H2O</text>
        <dbReference type="Rhea" id="RHEA:17281"/>
        <dbReference type="ChEBI" id="CHEBI:15377"/>
        <dbReference type="ChEBI" id="CHEBI:58515"/>
        <dbReference type="ChEBI" id="CHEBI:58929"/>
        <dbReference type="EC" id="4.2.1.108"/>
    </reaction>
</comment>
<comment type="pathway">
    <text evidence="1">Amine and polyamine biosynthesis; ectoine biosynthesis; L-ectoine from L-aspartate 4-semialdehyde: step 3/3.</text>
</comment>
<comment type="similarity">
    <text evidence="1">Belongs to the ectoine synthase family.</text>
</comment>
<organism>
    <name type="scientific">Vibrio cholerae serotype O1 (strain ATCC 39315 / El Tor Inaba N16961)</name>
    <dbReference type="NCBI Taxonomy" id="243277"/>
    <lineage>
        <taxon>Bacteria</taxon>
        <taxon>Pseudomonadati</taxon>
        <taxon>Pseudomonadota</taxon>
        <taxon>Gammaproteobacteria</taxon>
        <taxon>Vibrionales</taxon>
        <taxon>Vibrionaceae</taxon>
        <taxon>Vibrio</taxon>
    </lineage>
</organism>
<evidence type="ECO:0000255" key="1">
    <source>
        <dbReference type="HAMAP-Rule" id="MF_01255"/>
    </source>
</evidence>
<reference key="1">
    <citation type="journal article" date="2000" name="Nature">
        <title>DNA sequence of both chromosomes of the cholera pathogen Vibrio cholerae.</title>
        <authorList>
            <person name="Heidelberg J.F."/>
            <person name="Eisen J.A."/>
            <person name="Nelson W.C."/>
            <person name="Clayton R.A."/>
            <person name="Gwinn M.L."/>
            <person name="Dodson R.J."/>
            <person name="Haft D.H."/>
            <person name="Hickey E.K."/>
            <person name="Peterson J.D."/>
            <person name="Umayam L.A."/>
            <person name="Gill S.R."/>
            <person name="Nelson K.E."/>
            <person name="Read T.D."/>
            <person name="Tettelin H."/>
            <person name="Richardson D.L."/>
            <person name="Ermolaeva M.D."/>
            <person name="Vamathevan J.J."/>
            <person name="Bass S."/>
            <person name="Qin H."/>
            <person name="Dragoi I."/>
            <person name="Sellers P."/>
            <person name="McDonald L.A."/>
            <person name="Utterback T.R."/>
            <person name="Fleischmann R.D."/>
            <person name="Nierman W.C."/>
            <person name="White O."/>
            <person name="Salzberg S.L."/>
            <person name="Smith H.O."/>
            <person name="Colwell R.R."/>
            <person name="Mekalanos J.J."/>
            <person name="Venter J.C."/>
            <person name="Fraser C.M."/>
        </authorList>
    </citation>
    <scope>NUCLEOTIDE SEQUENCE [LARGE SCALE GENOMIC DNA]</scope>
    <source>
        <strain>ATCC 39315 / El Tor Inaba N16961</strain>
    </source>
</reference>
<sequence length="138" mass="15996">MIVRTLEECRQSERRVVAENWESVRMLLKDDHMGFSFHITTIYANTQTHIHYRNHLESVYCMSGEGEIEVVGGKTYPIQPGTLYILDQHDEHYLRAFSSEMVMACVFNPPLTGHEIHDAEGVYPLDKSELISQCHKEK</sequence>
<protein>
    <recommendedName>
        <fullName evidence="1">L-ectoine synthase</fullName>
        <ecNumber evidence="1">4.2.1.108</ecNumber>
    </recommendedName>
    <alternativeName>
        <fullName evidence="1">N-acetyldiaminobutyrate dehydratase</fullName>
    </alternativeName>
</protein>
<name>ECTC_VIBCH</name>
<accession>Q9KLC3</accession>
<feature type="chain" id="PRO_0000220159" description="L-ectoine synthase">
    <location>
        <begin position="1"/>
        <end position="138"/>
    </location>
</feature>
<proteinExistence type="inferred from homology"/>
<gene>
    <name evidence="1" type="primary">ectC</name>
    <name type="ordered locus">VC_A0823</name>
</gene>